<accession>Q0W6H4</accession>
<protein>
    <recommendedName>
        <fullName evidence="1">Protein pelota homolog</fullName>
        <ecNumber evidence="1">3.1.-.-</ecNumber>
    </recommendedName>
</protein>
<name>PELO_METAR</name>
<feature type="chain" id="PRO_0000361828" description="Protein pelota homolog">
    <location>
        <begin position="1"/>
        <end position="357"/>
    </location>
</feature>
<keyword id="KW-0963">Cytoplasm</keyword>
<keyword id="KW-0255">Endonuclease</keyword>
<keyword id="KW-0378">Hydrolase</keyword>
<keyword id="KW-0479">Metal-binding</keyword>
<keyword id="KW-0540">Nuclease</keyword>
<keyword id="KW-1185">Reference proteome</keyword>
<dbReference type="EC" id="3.1.-.-" evidence="1"/>
<dbReference type="EMBL" id="AM114193">
    <property type="protein sequence ID" value="CAJ36019.1"/>
    <property type="molecule type" value="Genomic_DNA"/>
</dbReference>
<dbReference type="RefSeq" id="WP_012036488.1">
    <property type="nucleotide sequence ID" value="NC_009464.1"/>
</dbReference>
<dbReference type="SMR" id="Q0W6H4"/>
<dbReference type="STRING" id="351160.RCIX613"/>
<dbReference type="GeneID" id="5144046"/>
<dbReference type="KEGG" id="rci:RCIX613"/>
<dbReference type="PATRIC" id="fig|351160.9.peg.2217"/>
<dbReference type="eggNOG" id="arCOG01741">
    <property type="taxonomic scope" value="Archaea"/>
</dbReference>
<dbReference type="OrthoDB" id="31300at2157"/>
<dbReference type="Proteomes" id="UP000000663">
    <property type="component" value="Chromosome"/>
</dbReference>
<dbReference type="GO" id="GO:0005737">
    <property type="term" value="C:cytoplasm"/>
    <property type="evidence" value="ECO:0007669"/>
    <property type="project" value="UniProtKB-SubCell"/>
</dbReference>
<dbReference type="GO" id="GO:0004519">
    <property type="term" value="F:endonuclease activity"/>
    <property type="evidence" value="ECO:0007669"/>
    <property type="project" value="UniProtKB-UniRule"/>
</dbReference>
<dbReference type="GO" id="GO:0046872">
    <property type="term" value="F:metal ion binding"/>
    <property type="evidence" value="ECO:0007669"/>
    <property type="project" value="UniProtKB-UniRule"/>
</dbReference>
<dbReference type="GO" id="GO:0070651">
    <property type="term" value="P:nonfunctional rRNA decay"/>
    <property type="evidence" value="ECO:0007669"/>
    <property type="project" value="TreeGrafter"/>
</dbReference>
<dbReference type="GO" id="GO:0070966">
    <property type="term" value="P:nuclear-transcribed mRNA catabolic process, no-go decay"/>
    <property type="evidence" value="ECO:0007669"/>
    <property type="project" value="InterPro"/>
</dbReference>
<dbReference type="GO" id="GO:0070481">
    <property type="term" value="P:nuclear-transcribed mRNA catabolic process, non-stop decay"/>
    <property type="evidence" value="ECO:0007669"/>
    <property type="project" value="InterPro"/>
</dbReference>
<dbReference type="GO" id="GO:0032790">
    <property type="term" value="P:ribosome disassembly"/>
    <property type="evidence" value="ECO:0007669"/>
    <property type="project" value="TreeGrafter"/>
</dbReference>
<dbReference type="GO" id="GO:0071025">
    <property type="term" value="P:RNA surveillance"/>
    <property type="evidence" value="ECO:0007669"/>
    <property type="project" value="InterPro"/>
</dbReference>
<dbReference type="FunFam" id="2.30.30.870:FF:000002">
    <property type="entry name" value="Protein pelota homolog"/>
    <property type="match status" value="1"/>
</dbReference>
<dbReference type="Gene3D" id="3.30.1330.30">
    <property type="match status" value="1"/>
</dbReference>
<dbReference type="Gene3D" id="3.30.420.60">
    <property type="entry name" value="eRF1 domain 2"/>
    <property type="match status" value="1"/>
</dbReference>
<dbReference type="Gene3D" id="2.30.30.870">
    <property type="entry name" value="Pelota, domain A"/>
    <property type="match status" value="1"/>
</dbReference>
<dbReference type="HAMAP" id="MF_01853">
    <property type="entry name" value="PelO"/>
    <property type="match status" value="1"/>
</dbReference>
<dbReference type="InterPro" id="IPR042226">
    <property type="entry name" value="eFR1_2_sf"/>
</dbReference>
<dbReference type="InterPro" id="IPR005140">
    <property type="entry name" value="eRF1_1_Pelota"/>
</dbReference>
<dbReference type="InterPro" id="IPR005141">
    <property type="entry name" value="eRF1_2"/>
</dbReference>
<dbReference type="InterPro" id="IPR005142">
    <property type="entry name" value="eRF1_3"/>
</dbReference>
<dbReference type="InterPro" id="IPR038069">
    <property type="entry name" value="Pelota/DOM34_N"/>
</dbReference>
<dbReference type="InterPro" id="IPR023521">
    <property type="entry name" value="Pelota_arc"/>
</dbReference>
<dbReference type="InterPro" id="IPR029064">
    <property type="entry name" value="Ribosomal_eL30-like_sf"/>
</dbReference>
<dbReference type="InterPro" id="IPR004405">
    <property type="entry name" value="Transl-rel_pelota"/>
</dbReference>
<dbReference type="NCBIfam" id="TIGR00111">
    <property type="entry name" value="pelota"/>
    <property type="match status" value="1"/>
</dbReference>
<dbReference type="PANTHER" id="PTHR10853">
    <property type="entry name" value="PELOTA"/>
    <property type="match status" value="1"/>
</dbReference>
<dbReference type="PANTHER" id="PTHR10853:SF0">
    <property type="entry name" value="PROTEIN PELOTA HOMOLOG"/>
    <property type="match status" value="1"/>
</dbReference>
<dbReference type="Pfam" id="PF03463">
    <property type="entry name" value="eRF1_1"/>
    <property type="match status" value="1"/>
</dbReference>
<dbReference type="Pfam" id="PF03464">
    <property type="entry name" value="eRF1_2"/>
    <property type="match status" value="1"/>
</dbReference>
<dbReference type="Pfam" id="PF03465">
    <property type="entry name" value="eRF1_3"/>
    <property type="match status" value="1"/>
</dbReference>
<dbReference type="SMART" id="SM01194">
    <property type="entry name" value="eRF1_1"/>
    <property type="match status" value="1"/>
</dbReference>
<dbReference type="SUPFAM" id="SSF159065">
    <property type="entry name" value="Dom34/Pelota N-terminal domain-like"/>
    <property type="match status" value="1"/>
</dbReference>
<dbReference type="SUPFAM" id="SSF55315">
    <property type="entry name" value="L30e-like"/>
    <property type="match status" value="1"/>
</dbReference>
<dbReference type="SUPFAM" id="SSF53137">
    <property type="entry name" value="Translational machinery components"/>
    <property type="match status" value="1"/>
</dbReference>
<evidence type="ECO:0000255" key="1">
    <source>
        <dbReference type="HAMAP-Rule" id="MF_01853"/>
    </source>
</evidence>
<sequence length="357" mass="39844">MKVNKEEYRGDYGEISLQPESLDDLWHLKYIVEPGDTVFAMTFRAVDSVSDKIRPDKVEKKLVRLGIKVESTEFHKFSNRLRIKGTIISDLDAGAYHTLNIEPYSELSIAKHWKSDQIERIRDAVEASKRPEVEIVTIEEGEAAIGYLRQYGIEEVSRIRQASSGKREGADARSVDGRGEFFGEVAAQLKYADKVQTIVVAGPGFIKDDFVKFLRVNHPAVAQKVIVEDTSSIGSSGFQEVLRRGAIQRVAEENRITREAQLIEALLSEIAKDGKATYGFAETKRAVDYGAVETLLIADETLRGLREKGARDIESLMRDVEHARGKVVVFSTEFEPGQRLEKLGGVASILRFPIGGD</sequence>
<comment type="function">
    <text evidence="1">May function in recognizing stalled ribosomes, interact with stem-loop structures in stalled mRNA molecules, and effect endonucleolytic cleavage of the mRNA. May play a role in the release non-functional ribosomes and degradation of damaged mRNAs. Has endoribonuclease activity.</text>
</comment>
<comment type="cofactor">
    <cofactor evidence="1">
        <name>a divalent metal cation</name>
        <dbReference type="ChEBI" id="CHEBI:60240"/>
    </cofactor>
</comment>
<comment type="subunit">
    <text evidence="1">Monomer.</text>
</comment>
<comment type="subcellular location">
    <subcellularLocation>
        <location evidence="1">Cytoplasm</location>
    </subcellularLocation>
</comment>
<comment type="domain">
    <text evidence="1">The N-terminal domain has the RNA-binding Sm fold. It harbors the endoribonuclease activity.</text>
</comment>
<comment type="similarity">
    <text evidence="1">Belongs to the eukaryotic release factor 1 family. Pelota subfamily.</text>
</comment>
<organism>
    <name type="scientific">Methanocella arvoryzae (strain DSM 22066 / NBRC 105507 / MRE50)</name>
    <dbReference type="NCBI Taxonomy" id="351160"/>
    <lineage>
        <taxon>Archaea</taxon>
        <taxon>Methanobacteriati</taxon>
        <taxon>Methanobacteriota</taxon>
        <taxon>Stenosarchaea group</taxon>
        <taxon>Methanomicrobia</taxon>
        <taxon>Methanocellales</taxon>
        <taxon>Methanocellaceae</taxon>
        <taxon>Methanocella</taxon>
    </lineage>
</organism>
<gene>
    <name evidence="1" type="primary">pelA</name>
    <name type="ordered locus">UNCMA_21660</name>
    <name type="ORF">RCIX613</name>
</gene>
<reference key="1">
    <citation type="journal article" date="2006" name="Science">
        <title>Genome of rice cluster I archaea -- the key methane producers in the rice rhizosphere.</title>
        <authorList>
            <person name="Erkel C."/>
            <person name="Kube M."/>
            <person name="Reinhardt R."/>
            <person name="Liesack W."/>
        </authorList>
    </citation>
    <scope>NUCLEOTIDE SEQUENCE [LARGE SCALE GENOMIC DNA]</scope>
    <source>
        <strain>DSM 22066 / NBRC 105507 / MRE50</strain>
    </source>
</reference>
<proteinExistence type="inferred from homology"/>